<comment type="function">
    <text evidence="1">The heterodimer acts as both an ATP-dependent DNA helicase and an ATP-dependent, dual-direction single-stranded exonuclease. Recognizes the chi site generating a DNA molecule suitable for the initiation of homologous recombination. The AddA nuclease domain is required for chi fragment generation; this subunit has the helicase and 3' -&gt; 5' nuclease activities.</text>
</comment>
<comment type="catalytic activity">
    <reaction evidence="1">
        <text>Couples ATP hydrolysis with the unwinding of duplex DNA by translocating in the 3'-5' direction.</text>
        <dbReference type="EC" id="5.6.2.4"/>
    </reaction>
</comment>
<comment type="catalytic activity">
    <reaction evidence="1">
        <text>ATP + H2O = ADP + phosphate + H(+)</text>
        <dbReference type="Rhea" id="RHEA:13065"/>
        <dbReference type="ChEBI" id="CHEBI:15377"/>
        <dbReference type="ChEBI" id="CHEBI:15378"/>
        <dbReference type="ChEBI" id="CHEBI:30616"/>
        <dbReference type="ChEBI" id="CHEBI:43474"/>
        <dbReference type="ChEBI" id="CHEBI:456216"/>
        <dbReference type="EC" id="5.6.2.4"/>
    </reaction>
</comment>
<comment type="cofactor">
    <cofactor evidence="1">
        <name>Mg(2+)</name>
        <dbReference type="ChEBI" id="CHEBI:18420"/>
    </cofactor>
</comment>
<comment type="subunit">
    <text evidence="1">Heterodimer of AddA and AddB/RexB.</text>
</comment>
<comment type="similarity">
    <text evidence="1">Belongs to the helicase family. AddA subfamily.</text>
</comment>
<accession>Q7A6H4</accession>
<keyword id="KW-0067">ATP-binding</keyword>
<keyword id="KW-0227">DNA damage</keyword>
<keyword id="KW-0234">DNA repair</keyword>
<keyword id="KW-0238">DNA-binding</keyword>
<keyword id="KW-0269">Exonuclease</keyword>
<keyword id="KW-0347">Helicase</keyword>
<keyword id="KW-0378">Hydrolase</keyword>
<keyword id="KW-0413">Isomerase</keyword>
<keyword id="KW-0540">Nuclease</keyword>
<keyword id="KW-0547">Nucleotide-binding</keyword>
<proteinExistence type="evidence at protein level"/>
<evidence type="ECO:0000255" key="1">
    <source>
        <dbReference type="HAMAP-Rule" id="MF_01451"/>
    </source>
</evidence>
<gene>
    <name evidence="1" type="primary">addA</name>
    <name type="ordered locus">SA0828</name>
</gene>
<reference key="1">
    <citation type="journal article" date="2001" name="Lancet">
        <title>Whole genome sequencing of meticillin-resistant Staphylococcus aureus.</title>
        <authorList>
            <person name="Kuroda M."/>
            <person name="Ohta T."/>
            <person name="Uchiyama I."/>
            <person name="Baba T."/>
            <person name="Yuzawa H."/>
            <person name="Kobayashi I."/>
            <person name="Cui L."/>
            <person name="Oguchi A."/>
            <person name="Aoki K."/>
            <person name="Nagai Y."/>
            <person name="Lian J.-Q."/>
            <person name="Ito T."/>
            <person name="Kanamori M."/>
            <person name="Matsumaru H."/>
            <person name="Maruyama A."/>
            <person name="Murakami H."/>
            <person name="Hosoyama A."/>
            <person name="Mizutani-Ui Y."/>
            <person name="Takahashi N.K."/>
            <person name="Sawano T."/>
            <person name="Inoue R."/>
            <person name="Kaito C."/>
            <person name="Sekimizu K."/>
            <person name="Hirakawa H."/>
            <person name="Kuhara S."/>
            <person name="Goto S."/>
            <person name="Yabuzaki J."/>
            <person name="Kanehisa M."/>
            <person name="Yamashita A."/>
            <person name="Oshima K."/>
            <person name="Furuya K."/>
            <person name="Yoshino C."/>
            <person name="Shiba T."/>
            <person name="Hattori M."/>
            <person name="Ogasawara N."/>
            <person name="Hayashi H."/>
            <person name="Hiramatsu K."/>
        </authorList>
    </citation>
    <scope>NUCLEOTIDE SEQUENCE [LARGE SCALE GENOMIC DNA]</scope>
    <source>
        <strain>N315</strain>
    </source>
</reference>
<reference key="2">
    <citation type="submission" date="2007-10" db="UniProtKB">
        <title>Shotgun proteomic analysis of total and membrane protein extracts of S. aureus strain N315.</title>
        <authorList>
            <person name="Vaezzadeh A.R."/>
            <person name="Deshusses J."/>
            <person name="Lescuyer P."/>
            <person name="Hochstrasser D.F."/>
        </authorList>
    </citation>
    <scope>IDENTIFICATION BY MASS SPECTROMETRY [LARGE SCALE ANALYSIS]</scope>
    <source>
        <strain>N315</strain>
    </source>
</reference>
<protein>
    <recommendedName>
        <fullName evidence="1">ATP-dependent helicase/nuclease subunit A</fullName>
        <ecNumber evidence="1">3.1.-.-</ecNumber>
        <ecNumber evidence="1">5.6.2.4</ecNumber>
    </recommendedName>
    <alternativeName>
        <fullName evidence="1">ATP-dependent helicase/nuclease AddA</fullName>
    </alternativeName>
    <alternativeName>
        <fullName evidence="1">DNA 3'-5' helicase AddA</fullName>
    </alternativeName>
</protein>
<organism>
    <name type="scientific">Staphylococcus aureus (strain N315)</name>
    <dbReference type="NCBI Taxonomy" id="158879"/>
    <lineage>
        <taxon>Bacteria</taxon>
        <taxon>Bacillati</taxon>
        <taxon>Bacillota</taxon>
        <taxon>Bacilli</taxon>
        <taxon>Bacillales</taxon>
        <taxon>Staphylococcaceae</taxon>
        <taxon>Staphylococcus</taxon>
    </lineage>
</organism>
<dbReference type="EC" id="3.1.-.-" evidence="1"/>
<dbReference type="EC" id="5.6.2.4" evidence="1"/>
<dbReference type="EMBL" id="BA000018">
    <property type="protein sequence ID" value="BAB42067.1"/>
    <property type="molecule type" value="Genomic_DNA"/>
</dbReference>
<dbReference type="PIR" id="H89863">
    <property type="entry name" value="H89863"/>
</dbReference>
<dbReference type="RefSeq" id="WP_000154921.1">
    <property type="nucleotide sequence ID" value="NC_002745.2"/>
</dbReference>
<dbReference type="SMR" id="Q7A6H4"/>
<dbReference type="EnsemblBacteria" id="BAB42067">
    <property type="protein sequence ID" value="BAB42067"/>
    <property type="gene ID" value="BAB42067"/>
</dbReference>
<dbReference type="KEGG" id="sau:SA0828"/>
<dbReference type="HOGENOM" id="CLU_001114_3_1_9"/>
<dbReference type="GO" id="GO:0005829">
    <property type="term" value="C:cytosol"/>
    <property type="evidence" value="ECO:0007669"/>
    <property type="project" value="TreeGrafter"/>
</dbReference>
<dbReference type="GO" id="GO:0033202">
    <property type="term" value="C:DNA helicase complex"/>
    <property type="evidence" value="ECO:0007669"/>
    <property type="project" value="TreeGrafter"/>
</dbReference>
<dbReference type="GO" id="GO:0043138">
    <property type="term" value="F:3'-5' DNA helicase activity"/>
    <property type="evidence" value="ECO:0007669"/>
    <property type="project" value="UniProtKB-UniRule"/>
</dbReference>
<dbReference type="GO" id="GO:0008408">
    <property type="term" value="F:3'-5' exonuclease activity"/>
    <property type="evidence" value="ECO:0007669"/>
    <property type="project" value="UniProtKB-UniRule"/>
</dbReference>
<dbReference type="GO" id="GO:0005524">
    <property type="term" value="F:ATP binding"/>
    <property type="evidence" value="ECO:0007669"/>
    <property type="project" value="UniProtKB-UniRule"/>
</dbReference>
<dbReference type="GO" id="GO:0016887">
    <property type="term" value="F:ATP hydrolysis activity"/>
    <property type="evidence" value="ECO:0007669"/>
    <property type="project" value="RHEA"/>
</dbReference>
<dbReference type="GO" id="GO:0003690">
    <property type="term" value="F:double-stranded DNA binding"/>
    <property type="evidence" value="ECO:0007669"/>
    <property type="project" value="UniProtKB-UniRule"/>
</dbReference>
<dbReference type="GO" id="GO:0000724">
    <property type="term" value="P:double-strand break repair via homologous recombination"/>
    <property type="evidence" value="ECO:0007669"/>
    <property type="project" value="UniProtKB-UniRule"/>
</dbReference>
<dbReference type="CDD" id="cd17932">
    <property type="entry name" value="DEXQc_UvrD"/>
    <property type="match status" value="2"/>
</dbReference>
<dbReference type="FunFam" id="3.40.50.300:FF:001196">
    <property type="entry name" value="ATP-dependent helicase/nuclease subunit A"/>
    <property type="match status" value="1"/>
</dbReference>
<dbReference type="FunFam" id="3.40.50.300:FF:001715">
    <property type="entry name" value="ATP-dependent helicase/nuclease subunit A"/>
    <property type="match status" value="1"/>
</dbReference>
<dbReference type="Gene3D" id="3.90.320.10">
    <property type="match status" value="1"/>
</dbReference>
<dbReference type="Gene3D" id="3.40.50.300">
    <property type="entry name" value="P-loop containing nucleotide triphosphate hydrolases"/>
    <property type="match status" value="4"/>
</dbReference>
<dbReference type="Gene3D" id="1.10.486.10">
    <property type="entry name" value="PCRA, domain 4"/>
    <property type="match status" value="1"/>
</dbReference>
<dbReference type="HAMAP" id="MF_01451">
    <property type="entry name" value="AddA"/>
    <property type="match status" value="1"/>
</dbReference>
<dbReference type="InterPro" id="IPR014152">
    <property type="entry name" value="AddA"/>
</dbReference>
<dbReference type="InterPro" id="IPR014017">
    <property type="entry name" value="DNA_helicase_UvrD-like_C"/>
</dbReference>
<dbReference type="InterPro" id="IPR000212">
    <property type="entry name" value="DNA_helicase_UvrD/REP"/>
</dbReference>
<dbReference type="InterPro" id="IPR027417">
    <property type="entry name" value="P-loop_NTPase"/>
</dbReference>
<dbReference type="InterPro" id="IPR011604">
    <property type="entry name" value="PDDEXK-like_dom_sf"/>
</dbReference>
<dbReference type="InterPro" id="IPR038726">
    <property type="entry name" value="PDDEXK_AddAB-type"/>
</dbReference>
<dbReference type="InterPro" id="IPR011335">
    <property type="entry name" value="Restrct_endonuc-II-like"/>
</dbReference>
<dbReference type="InterPro" id="IPR014016">
    <property type="entry name" value="UvrD-like_ATP-bd"/>
</dbReference>
<dbReference type="NCBIfam" id="TIGR02785">
    <property type="entry name" value="addA_Gpos"/>
    <property type="match status" value="1"/>
</dbReference>
<dbReference type="PANTHER" id="PTHR11070:SF48">
    <property type="entry name" value="ATP-DEPENDENT HELICASE_NUCLEASE SUBUNIT A"/>
    <property type="match status" value="1"/>
</dbReference>
<dbReference type="PANTHER" id="PTHR11070">
    <property type="entry name" value="UVRD / RECB / PCRA DNA HELICASE FAMILY MEMBER"/>
    <property type="match status" value="1"/>
</dbReference>
<dbReference type="Pfam" id="PF12705">
    <property type="entry name" value="PDDEXK_1"/>
    <property type="match status" value="1"/>
</dbReference>
<dbReference type="Pfam" id="PF00580">
    <property type="entry name" value="UvrD-helicase"/>
    <property type="match status" value="1"/>
</dbReference>
<dbReference type="Pfam" id="PF13361">
    <property type="entry name" value="UvrD_C"/>
    <property type="match status" value="1"/>
</dbReference>
<dbReference type="SUPFAM" id="SSF52540">
    <property type="entry name" value="P-loop containing nucleoside triphosphate hydrolases"/>
    <property type="match status" value="1"/>
</dbReference>
<dbReference type="SUPFAM" id="SSF52980">
    <property type="entry name" value="Restriction endonuclease-like"/>
    <property type="match status" value="1"/>
</dbReference>
<dbReference type="PROSITE" id="PS51198">
    <property type="entry name" value="UVRD_HELICASE_ATP_BIND"/>
    <property type="match status" value="1"/>
</dbReference>
<dbReference type="PROSITE" id="PS51217">
    <property type="entry name" value="UVRD_HELICASE_CTER"/>
    <property type="match status" value="1"/>
</dbReference>
<sequence>MTIPEKPQGVIWTDAQWQSIYATGQDVLVAAAAGSGKTAVLVERIIQKILRDGIDVDRLLVVTFTNLSAREMKHRVDQRIQEASIADPANAHLKNQRIKIHQAQISTLHSFCLKLIQQHYDVLNIDPNFRTSSEAENILLLEQTIDEVIEQHYDILDPAFIELTEQLSSDRSDDQFRMIIKQLYFFSVANPNPTNWLDQLVTPYEEEAQQAQLIQLLTDLSKVFITAAYDALNKAYDLFSMMDGVDKHLAVIEDERRLMGRVLEGGFIDIPYLTDHEFGARLPNVTAKIKEANEMMVDALEDAKLQYKKYKSLIDKVKNDYFSREADDLKADMQQLAPRVKYLARIVKDVMSEFNRKKRSKNILDFSDYEHFALQILTNEDGSPSEIAESYRQHFQEILVDEYQDTNRVQEKILSCIKTGDEHNGNLFMVGDVKQSIYKFRQADPSLFIEKYQRFTIDGDGTGRRIDLSQNFRSRKEVLSTTNYIFKHMMDEQVGEVKYDEAAQLYYGAPYDESDHPVNLKVLVEADQEHSDLTGSEQEAHFIVEQVKDILEHQKVYDMKTGSYRSATYKDIVILERSFGQARNLQQAFKNEDIPFHVNSREGYFEQTEVRLVLSFLRAIDNPLQDIYLVGLMRSVIYQFKEDELAQIRILSPNDDYFYQSIVNYINDEAADAILVDKLKMFLSDIQSYQQYSKDHPVYQLIDKFYNDHYVIQYFSGLIGGRGRRANLYGLFNKAIEFENSSFRGLYQFIRFIDELIERGKDFGEENVVGPNDNVVRMMTIHSSKGLEFPFVIYSGLSKDFNKRDLKQPVILNQQFGLGMDYFDVDKEMAFPSLASVAYKAVAEKELVSEEMRLVYVALTRAKEQLYLIGRVKNDKSLLELEQLSISGEHIAVNERLTSPNPFHLIYSILSKHQSASIPDDLKFEKDIAQVEDSSRPNVNISIIYFEDVSTETILDNNEYRSVNQLETMQNGNEDVKAQIKHQLDYQYPYVNDTKKPSKQSVSELKRQYETEESGTSYERVRQYRIGFSTYERPKFLSEQGKRKANEIGTLMHTVMQHLPFKKERISEVELHQYIDGLIDKHIIEADAKKDIRMDEIMTFINSELYSIIAEAEQVYRELPFVVNQALVDQLPQGDEDVSIIQGMIDLIFVKDGVHYFVDYKTDAFNRRRGMTDEEIGTQLKNKYKIQMKYYQNTLQTILNKEVKGYLYFFKFGTLQL</sequence>
<name>ADDA_STAAN</name>
<feature type="chain" id="PRO_0000379316" description="ATP-dependent helicase/nuclease subunit A">
    <location>
        <begin position="1"/>
        <end position="1217"/>
    </location>
</feature>
<feature type="domain" description="UvrD-like helicase ATP-binding" evidence="1">
    <location>
        <begin position="10"/>
        <end position="475"/>
    </location>
</feature>
<feature type="domain" description="UvrD-like helicase C-terminal" evidence="1">
    <location>
        <begin position="476"/>
        <end position="786"/>
    </location>
</feature>
<feature type="binding site" evidence="1">
    <location>
        <begin position="31"/>
        <end position="38"/>
    </location>
    <ligand>
        <name>ATP</name>
        <dbReference type="ChEBI" id="CHEBI:30616"/>
    </ligand>
</feature>